<evidence type="ECO:0000255" key="1">
    <source>
        <dbReference type="HAMAP-Rule" id="MF_00154"/>
    </source>
</evidence>
<proteinExistence type="inferred from homology"/>
<dbReference type="EC" id="2.5.1.141" evidence="1"/>
<dbReference type="EMBL" id="CP000127">
    <property type="protein sequence ID" value="ABA59480.1"/>
    <property type="molecule type" value="Genomic_DNA"/>
</dbReference>
<dbReference type="RefSeq" id="WP_002812983.1">
    <property type="nucleotide sequence ID" value="NC_007484.1"/>
</dbReference>
<dbReference type="SMR" id="Q3J6R6"/>
<dbReference type="FunCoup" id="Q3J6R6">
    <property type="interactions" value="411"/>
</dbReference>
<dbReference type="STRING" id="323261.Noc_3039"/>
<dbReference type="KEGG" id="noc:Noc_3039"/>
<dbReference type="eggNOG" id="COG0109">
    <property type="taxonomic scope" value="Bacteria"/>
</dbReference>
<dbReference type="HOGENOM" id="CLU_029631_0_2_6"/>
<dbReference type="InParanoid" id="Q3J6R6"/>
<dbReference type="UniPathway" id="UPA00834">
    <property type="reaction ID" value="UER00712"/>
</dbReference>
<dbReference type="Proteomes" id="UP000006838">
    <property type="component" value="Chromosome"/>
</dbReference>
<dbReference type="GO" id="GO:0005886">
    <property type="term" value="C:plasma membrane"/>
    <property type="evidence" value="ECO:0007669"/>
    <property type="project" value="UniProtKB-SubCell"/>
</dbReference>
<dbReference type="GO" id="GO:0008495">
    <property type="term" value="F:protoheme IX farnesyltransferase activity"/>
    <property type="evidence" value="ECO:0007669"/>
    <property type="project" value="UniProtKB-UniRule"/>
</dbReference>
<dbReference type="GO" id="GO:0048034">
    <property type="term" value="P:heme O biosynthetic process"/>
    <property type="evidence" value="ECO:0007669"/>
    <property type="project" value="UniProtKB-UniRule"/>
</dbReference>
<dbReference type="CDD" id="cd13957">
    <property type="entry name" value="PT_UbiA_Cox10"/>
    <property type="match status" value="1"/>
</dbReference>
<dbReference type="FunFam" id="1.10.357.140:FF:000001">
    <property type="entry name" value="Protoheme IX farnesyltransferase"/>
    <property type="match status" value="1"/>
</dbReference>
<dbReference type="Gene3D" id="1.10.357.140">
    <property type="entry name" value="UbiA prenyltransferase"/>
    <property type="match status" value="1"/>
</dbReference>
<dbReference type="HAMAP" id="MF_00154">
    <property type="entry name" value="CyoE_CtaB"/>
    <property type="match status" value="1"/>
</dbReference>
<dbReference type="InterPro" id="IPR006369">
    <property type="entry name" value="Protohaem_IX_farnesylTrfase"/>
</dbReference>
<dbReference type="InterPro" id="IPR000537">
    <property type="entry name" value="UbiA_prenyltransferase"/>
</dbReference>
<dbReference type="InterPro" id="IPR044878">
    <property type="entry name" value="UbiA_sf"/>
</dbReference>
<dbReference type="NCBIfam" id="TIGR01473">
    <property type="entry name" value="cyoE_ctaB"/>
    <property type="match status" value="1"/>
</dbReference>
<dbReference type="NCBIfam" id="NF003349">
    <property type="entry name" value="PRK04375.1-2"/>
    <property type="match status" value="1"/>
</dbReference>
<dbReference type="PANTHER" id="PTHR43448:SF7">
    <property type="entry name" value="4-HYDROXYBENZOATE SOLANESYLTRANSFERASE"/>
    <property type="match status" value="1"/>
</dbReference>
<dbReference type="PANTHER" id="PTHR43448">
    <property type="entry name" value="PROTOHEME IX FARNESYLTRANSFERASE, MITOCHONDRIAL"/>
    <property type="match status" value="1"/>
</dbReference>
<dbReference type="Pfam" id="PF01040">
    <property type="entry name" value="UbiA"/>
    <property type="match status" value="1"/>
</dbReference>
<feature type="chain" id="PRO_0000326911" description="Protoheme IX farnesyltransferase">
    <location>
        <begin position="1"/>
        <end position="299"/>
    </location>
</feature>
<feature type="transmembrane region" description="Helical" evidence="1">
    <location>
        <begin position="25"/>
        <end position="45"/>
    </location>
</feature>
<feature type="transmembrane region" description="Helical" evidence="1">
    <location>
        <begin position="51"/>
        <end position="71"/>
    </location>
</feature>
<feature type="transmembrane region" description="Helical" evidence="1">
    <location>
        <begin position="97"/>
        <end position="117"/>
    </location>
</feature>
<feature type="transmembrane region" description="Helical" evidence="1">
    <location>
        <begin position="119"/>
        <end position="139"/>
    </location>
</feature>
<feature type="transmembrane region" description="Helical" evidence="1">
    <location>
        <begin position="147"/>
        <end position="167"/>
    </location>
</feature>
<feature type="transmembrane region" description="Helical" evidence="1">
    <location>
        <begin position="173"/>
        <end position="193"/>
    </location>
</feature>
<feature type="transmembrane region" description="Helical" evidence="1">
    <location>
        <begin position="225"/>
        <end position="245"/>
    </location>
</feature>
<feature type="transmembrane region" description="Helical" evidence="1">
    <location>
        <begin position="275"/>
        <end position="295"/>
    </location>
</feature>
<keyword id="KW-0997">Cell inner membrane</keyword>
<keyword id="KW-1003">Cell membrane</keyword>
<keyword id="KW-0350">Heme biosynthesis</keyword>
<keyword id="KW-0472">Membrane</keyword>
<keyword id="KW-1185">Reference proteome</keyword>
<keyword id="KW-0808">Transferase</keyword>
<keyword id="KW-0812">Transmembrane</keyword>
<keyword id="KW-1133">Transmembrane helix</keyword>
<sequence>MTTITLIRGALTNWREYLVLCKPRIVSLIVFTAIVGMFLSVPDLAPWRVFLFGTLGIGLGAASAAAINHLIDEKADAVMNRTQGRPLPTGKLSREQALAFAITLGLSSMIILYFLVNPLTAWLTLASMIGYGIIYTAFLKPATPQNIVLGGASGAMPPVLGWAAVTGELHVHAFLLFLIIFVWTPPHFWALALARREEYSRTKYPMLPVTHGVDFTKQQIVLYTFLLFAVSLLPFVSHMSGLLYLVGAIGLGGRFVYLTIVLYRNTSNELAMKTFGYSIVYLAALFAFLLVDHYLPKFL</sequence>
<organism>
    <name type="scientific">Nitrosococcus oceani (strain ATCC 19707 / BCRC 17464 / JCM 30415 / NCIMB 11848 / C-107)</name>
    <dbReference type="NCBI Taxonomy" id="323261"/>
    <lineage>
        <taxon>Bacteria</taxon>
        <taxon>Pseudomonadati</taxon>
        <taxon>Pseudomonadota</taxon>
        <taxon>Gammaproteobacteria</taxon>
        <taxon>Chromatiales</taxon>
        <taxon>Chromatiaceae</taxon>
        <taxon>Nitrosococcus</taxon>
    </lineage>
</organism>
<comment type="function">
    <text evidence="1">Converts heme B (protoheme IX) to heme O by substitution of the vinyl group on carbon 2 of heme B porphyrin ring with a hydroxyethyl farnesyl side group.</text>
</comment>
<comment type="catalytic activity">
    <reaction evidence="1">
        <text>heme b + (2E,6E)-farnesyl diphosphate + H2O = Fe(II)-heme o + diphosphate</text>
        <dbReference type="Rhea" id="RHEA:28070"/>
        <dbReference type="ChEBI" id="CHEBI:15377"/>
        <dbReference type="ChEBI" id="CHEBI:33019"/>
        <dbReference type="ChEBI" id="CHEBI:60344"/>
        <dbReference type="ChEBI" id="CHEBI:60530"/>
        <dbReference type="ChEBI" id="CHEBI:175763"/>
        <dbReference type="EC" id="2.5.1.141"/>
    </reaction>
</comment>
<comment type="pathway">
    <text evidence="1">Porphyrin-containing compound metabolism; heme O biosynthesis; heme O from protoheme: step 1/1.</text>
</comment>
<comment type="subcellular location">
    <subcellularLocation>
        <location evidence="1">Cell inner membrane</location>
        <topology evidence="1">Multi-pass membrane protein</topology>
    </subcellularLocation>
</comment>
<comment type="miscellaneous">
    <text evidence="1">Carbon 2 of the heme B porphyrin ring is defined according to the Fischer nomenclature.</text>
</comment>
<comment type="similarity">
    <text evidence="1">Belongs to the UbiA prenyltransferase family. Protoheme IX farnesyltransferase subfamily.</text>
</comment>
<accession>Q3J6R6</accession>
<protein>
    <recommendedName>
        <fullName evidence="1">Protoheme IX farnesyltransferase</fullName>
        <ecNumber evidence="1">2.5.1.141</ecNumber>
    </recommendedName>
    <alternativeName>
        <fullName evidence="1">Heme B farnesyltransferase</fullName>
    </alternativeName>
    <alternativeName>
        <fullName evidence="1">Heme O synthase</fullName>
    </alternativeName>
</protein>
<gene>
    <name evidence="1" type="primary">cyoE</name>
    <name type="ordered locus">Noc_3039</name>
</gene>
<reference key="1">
    <citation type="journal article" date="2006" name="Appl. Environ. Microbiol.">
        <title>Complete genome sequence of the marine, chemolithoautotrophic, ammonia-oxidizing bacterium Nitrosococcus oceani ATCC 19707.</title>
        <authorList>
            <person name="Klotz M.G."/>
            <person name="Arp D.J."/>
            <person name="Chain P.S.G."/>
            <person name="El-Sheikh A.F."/>
            <person name="Hauser L.J."/>
            <person name="Hommes N.G."/>
            <person name="Larimer F.W."/>
            <person name="Malfatti S.A."/>
            <person name="Norton J.M."/>
            <person name="Poret-Peterson A.T."/>
            <person name="Vergez L.M."/>
            <person name="Ward B.B."/>
        </authorList>
    </citation>
    <scope>NUCLEOTIDE SEQUENCE [LARGE SCALE GENOMIC DNA]</scope>
    <source>
        <strain>ATCC 19707 / BCRC 17464 / JCM 30415 / NCIMB 11848 / C-107</strain>
    </source>
</reference>
<name>CYOE_NITOC</name>